<feature type="chain" id="PRO_1000185365" description="Phosphoglucosamine mutase">
    <location>
        <begin position="1"/>
        <end position="444"/>
    </location>
</feature>
<feature type="active site" description="Phosphoserine intermediate" evidence="1">
    <location>
        <position position="102"/>
    </location>
</feature>
<feature type="binding site" description="via phosphate group" evidence="1">
    <location>
        <position position="102"/>
    </location>
    <ligand>
        <name>Mg(2+)</name>
        <dbReference type="ChEBI" id="CHEBI:18420"/>
    </ligand>
</feature>
<feature type="binding site" evidence="1">
    <location>
        <position position="241"/>
    </location>
    <ligand>
        <name>Mg(2+)</name>
        <dbReference type="ChEBI" id="CHEBI:18420"/>
    </ligand>
</feature>
<feature type="binding site" evidence="1">
    <location>
        <position position="243"/>
    </location>
    <ligand>
        <name>Mg(2+)</name>
        <dbReference type="ChEBI" id="CHEBI:18420"/>
    </ligand>
</feature>
<feature type="binding site" evidence="1">
    <location>
        <position position="245"/>
    </location>
    <ligand>
        <name>Mg(2+)</name>
        <dbReference type="ChEBI" id="CHEBI:18420"/>
    </ligand>
</feature>
<feature type="modified residue" description="Phosphoserine" evidence="1">
    <location>
        <position position="102"/>
    </location>
</feature>
<protein>
    <recommendedName>
        <fullName evidence="1">Phosphoglucosamine mutase</fullName>
        <ecNumber evidence="1">5.4.2.10</ecNumber>
    </recommendedName>
</protein>
<name>GLMM_ACIET</name>
<accession>B9MI07</accession>
<sequence length="444" mass="47793">MTRKYFGTDGIRGTVGQSPITPDFALRLAHAVGRVLRRTQERPTVLIGKDTRISGYMLESALESGFNSAGVDVVLLGPLPTPGVAYLTRAQRASLGVVISASHNPYPDNGIKFFSAQGTKLPDAWEEEVEAALEQPPVWADSASLGKTRRLDDAAGRYIEFCKSTFANDLTLRGLKIVVDAAHGAAYHIAPKVFHELGAEVLAIGCAPDGLNINHQVGATHPDALVRAVRANHADYGIALDGDADRVQMVDAAGRLFNGDELLYVMVAARLARDEHVPGVVGTLMTNMAVEEALQRRGVKFMRAKVGDRYVLEELQRQHWLLGGEGSGHLLALDRHTTGDGLISALQVLQACVRSGKTLAQLLADVPLFPQVLLNVRLNPGQDWKTNPVLADAIRDAEAELGAHGRVLVRASGTEPLLRVMVEAREAEQANRCAQRIADAARAG</sequence>
<proteinExistence type="inferred from homology"/>
<dbReference type="EC" id="5.4.2.10" evidence="1"/>
<dbReference type="EMBL" id="CP001392">
    <property type="protein sequence ID" value="ACM32939.1"/>
    <property type="molecule type" value="Genomic_DNA"/>
</dbReference>
<dbReference type="RefSeq" id="WP_015913066.1">
    <property type="nucleotide sequence ID" value="NC_011992.1"/>
</dbReference>
<dbReference type="SMR" id="B9MI07"/>
<dbReference type="KEGG" id="dia:Dtpsy_1477"/>
<dbReference type="eggNOG" id="COG1109">
    <property type="taxonomic scope" value="Bacteria"/>
</dbReference>
<dbReference type="HOGENOM" id="CLU_016950_7_0_4"/>
<dbReference type="Proteomes" id="UP000000450">
    <property type="component" value="Chromosome"/>
</dbReference>
<dbReference type="GO" id="GO:0005829">
    <property type="term" value="C:cytosol"/>
    <property type="evidence" value="ECO:0007669"/>
    <property type="project" value="TreeGrafter"/>
</dbReference>
<dbReference type="GO" id="GO:0000287">
    <property type="term" value="F:magnesium ion binding"/>
    <property type="evidence" value="ECO:0007669"/>
    <property type="project" value="UniProtKB-UniRule"/>
</dbReference>
<dbReference type="GO" id="GO:0008966">
    <property type="term" value="F:phosphoglucosamine mutase activity"/>
    <property type="evidence" value="ECO:0007669"/>
    <property type="project" value="UniProtKB-UniRule"/>
</dbReference>
<dbReference type="GO" id="GO:0004615">
    <property type="term" value="F:phosphomannomutase activity"/>
    <property type="evidence" value="ECO:0007669"/>
    <property type="project" value="TreeGrafter"/>
</dbReference>
<dbReference type="GO" id="GO:0005975">
    <property type="term" value="P:carbohydrate metabolic process"/>
    <property type="evidence" value="ECO:0007669"/>
    <property type="project" value="InterPro"/>
</dbReference>
<dbReference type="GO" id="GO:0009252">
    <property type="term" value="P:peptidoglycan biosynthetic process"/>
    <property type="evidence" value="ECO:0007669"/>
    <property type="project" value="TreeGrafter"/>
</dbReference>
<dbReference type="GO" id="GO:0006048">
    <property type="term" value="P:UDP-N-acetylglucosamine biosynthetic process"/>
    <property type="evidence" value="ECO:0007669"/>
    <property type="project" value="TreeGrafter"/>
</dbReference>
<dbReference type="CDD" id="cd05802">
    <property type="entry name" value="GlmM"/>
    <property type="match status" value="1"/>
</dbReference>
<dbReference type="FunFam" id="3.30.310.50:FF:000001">
    <property type="entry name" value="Phosphoglucosamine mutase"/>
    <property type="match status" value="1"/>
</dbReference>
<dbReference type="FunFam" id="3.40.120.10:FF:000001">
    <property type="entry name" value="Phosphoglucosamine mutase"/>
    <property type="match status" value="1"/>
</dbReference>
<dbReference type="FunFam" id="3.40.120.10:FF:000003">
    <property type="entry name" value="Phosphoglucosamine mutase"/>
    <property type="match status" value="1"/>
</dbReference>
<dbReference type="Gene3D" id="3.40.120.10">
    <property type="entry name" value="Alpha-D-Glucose-1,6-Bisphosphate, subunit A, domain 3"/>
    <property type="match status" value="3"/>
</dbReference>
<dbReference type="Gene3D" id="3.30.310.50">
    <property type="entry name" value="Alpha-D-phosphohexomutase, C-terminal domain"/>
    <property type="match status" value="1"/>
</dbReference>
<dbReference type="HAMAP" id="MF_01554_B">
    <property type="entry name" value="GlmM_B"/>
    <property type="match status" value="1"/>
</dbReference>
<dbReference type="InterPro" id="IPR005844">
    <property type="entry name" value="A-D-PHexomutase_a/b/a-I"/>
</dbReference>
<dbReference type="InterPro" id="IPR016055">
    <property type="entry name" value="A-D-PHexomutase_a/b/a-I/II/III"/>
</dbReference>
<dbReference type="InterPro" id="IPR005845">
    <property type="entry name" value="A-D-PHexomutase_a/b/a-II"/>
</dbReference>
<dbReference type="InterPro" id="IPR005846">
    <property type="entry name" value="A-D-PHexomutase_a/b/a-III"/>
</dbReference>
<dbReference type="InterPro" id="IPR005843">
    <property type="entry name" value="A-D-PHexomutase_C"/>
</dbReference>
<dbReference type="InterPro" id="IPR036900">
    <property type="entry name" value="A-D-PHexomutase_C_sf"/>
</dbReference>
<dbReference type="InterPro" id="IPR016066">
    <property type="entry name" value="A-D-PHexomutase_CS"/>
</dbReference>
<dbReference type="InterPro" id="IPR005841">
    <property type="entry name" value="Alpha-D-phosphohexomutase_SF"/>
</dbReference>
<dbReference type="InterPro" id="IPR006352">
    <property type="entry name" value="GlmM_bact"/>
</dbReference>
<dbReference type="InterPro" id="IPR050060">
    <property type="entry name" value="Phosphoglucosamine_mutase"/>
</dbReference>
<dbReference type="NCBIfam" id="TIGR01455">
    <property type="entry name" value="glmM"/>
    <property type="match status" value="1"/>
</dbReference>
<dbReference type="NCBIfam" id="NF008139">
    <property type="entry name" value="PRK10887.1"/>
    <property type="match status" value="1"/>
</dbReference>
<dbReference type="PANTHER" id="PTHR42946:SF1">
    <property type="entry name" value="PHOSPHOGLUCOMUTASE (ALPHA-D-GLUCOSE-1,6-BISPHOSPHATE-DEPENDENT)"/>
    <property type="match status" value="1"/>
</dbReference>
<dbReference type="PANTHER" id="PTHR42946">
    <property type="entry name" value="PHOSPHOHEXOSE MUTASE"/>
    <property type="match status" value="1"/>
</dbReference>
<dbReference type="Pfam" id="PF02878">
    <property type="entry name" value="PGM_PMM_I"/>
    <property type="match status" value="1"/>
</dbReference>
<dbReference type="Pfam" id="PF02879">
    <property type="entry name" value="PGM_PMM_II"/>
    <property type="match status" value="1"/>
</dbReference>
<dbReference type="Pfam" id="PF02880">
    <property type="entry name" value="PGM_PMM_III"/>
    <property type="match status" value="1"/>
</dbReference>
<dbReference type="Pfam" id="PF00408">
    <property type="entry name" value="PGM_PMM_IV"/>
    <property type="match status" value="1"/>
</dbReference>
<dbReference type="PRINTS" id="PR00509">
    <property type="entry name" value="PGMPMM"/>
</dbReference>
<dbReference type="SUPFAM" id="SSF55957">
    <property type="entry name" value="Phosphoglucomutase, C-terminal domain"/>
    <property type="match status" value="1"/>
</dbReference>
<dbReference type="SUPFAM" id="SSF53738">
    <property type="entry name" value="Phosphoglucomutase, first 3 domains"/>
    <property type="match status" value="3"/>
</dbReference>
<dbReference type="PROSITE" id="PS00710">
    <property type="entry name" value="PGM_PMM"/>
    <property type="match status" value="1"/>
</dbReference>
<gene>
    <name evidence="1" type="primary">glmM</name>
    <name type="ordered locus">Dtpsy_1477</name>
</gene>
<keyword id="KW-0413">Isomerase</keyword>
<keyword id="KW-0460">Magnesium</keyword>
<keyword id="KW-0479">Metal-binding</keyword>
<keyword id="KW-0597">Phosphoprotein</keyword>
<keyword id="KW-1185">Reference proteome</keyword>
<organism>
    <name type="scientific">Acidovorax ebreus (strain TPSY)</name>
    <name type="common">Diaphorobacter sp. (strain TPSY)</name>
    <dbReference type="NCBI Taxonomy" id="535289"/>
    <lineage>
        <taxon>Bacteria</taxon>
        <taxon>Pseudomonadati</taxon>
        <taxon>Pseudomonadota</taxon>
        <taxon>Betaproteobacteria</taxon>
        <taxon>Burkholderiales</taxon>
        <taxon>Comamonadaceae</taxon>
        <taxon>Diaphorobacter</taxon>
    </lineage>
</organism>
<reference key="1">
    <citation type="submission" date="2009-01" db="EMBL/GenBank/DDBJ databases">
        <title>Complete sequence of Diaphorobacter sp. TPSY.</title>
        <authorList>
            <consortium name="US DOE Joint Genome Institute"/>
            <person name="Lucas S."/>
            <person name="Copeland A."/>
            <person name="Lapidus A."/>
            <person name="Glavina del Rio T."/>
            <person name="Tice H."/>
            <person name="Bruce D."/>
            <person name="Goodwin L."/>
            <person name="Pitluck S."/>
            <person name="Chertkov O."/>
            <person name="Brettin T."/>
            <person name="Detter J.C."/>
            <person name="Han C."/>
            <person name="Larimer F."/>
            <person name="Land M."/>
            <person name="Hauser L."/>
            <person name="Kyrpides N."/>
            <person name="Mikhailova N."/>
            <person name="Coates J.D."/>
        </authorList>
    </citation>
    <scope>NUCLEOTIDE SEQUENCE [LARGE SCALE GENOMIC DNA]</scope>
    <source>
        <strain>TPSY</strain>
    </source>
</reference>
<evidence type="ECO:0000255" key="1">
    <source>
        <dbReference type="HAMAP-Rule" id="MF_01554"/>
    </source>
</evidence>
<comment type="function">
    <text evidence="1">Catalyzes the conversion of glucosamine-6-phosphate to glucosamine-1-phosphate.</text>
</comment>
<comment type="catalytic activity">
    <reaction evidence="1">
        <text>alpha-D-glucosamine 1-phosphate = D-glucosamine 6-phosphate</text>
        <dbReference type="Rhea" id="RHEA:23424"/>
        <dbReference type="ChEBI" id="CHEBI:58516"/>
        <dbReference type="ChEBI" id="CHEBI:58725"/>
        <dbReference type="EC" id="5.4.2.10"/>
    </reaction>
</comment>
<comment type="cofactor">
    <cofactor evidence="1">
        <name>Mg(2+)</name>
        <dbReference type="ChEBI" id="CHEBI:18420"/>
    </cofactor>
    <text evidence="1">Binds 1 Mg(2+) ion per subunit.</text>
</comment>
<comment type="PTM">
    <text evidence="1">Activated by phosphorylation.</text>
</comment>
<comment type="similarity">
    <text evidence="1">Belongs to the phosphohexose mutase family.</text>
</comment>